<keyword id="KW-0963">Cytoplasm</keyword>
<keyword id="KW-0235">DNA replication</keyword>
<keyword id="KW-0239">DNA-directed DNA polymerase</keyword>
<keyword id="KW-0548">Nucleotidyltransferase</keyword>
<keyword id="KW-1185">Reference proteome</keyword>
<keyword id="KW-0808">Transferase</keyword>
<organism>
    <name type="scientific">Bacillus subtilis (strain 168)</name>
    <dbReference type="NCBI Taxonomy" id="224308"/>
    <lineage>
        <taxon>Bacteria</taxon>
        <taxon>Bacillati</taxon>
        <taxon>Bacillota</taxon>
        <taxon>Bacilli</taxon>
        <taxon>Bacillales</taxon>
        <taxon>Bacillaceae</taxon>
        <taxon>Bacillus</taxon>
    </lineage>
</organism>
<comment type="function">
    <text evidence="1">DNA polymerase III is a complex, multichain enzyme responsible for most of the replicative synthesis in bacteria. This DNA polymerase also exhibits 3' to 5' exonuclease activity. The alpha chain is the DNA polymerase (By similarity).</text>
</comment>
<comment type="catalytic activity">
    <reaction>
        <text>DNA(n) + a 2'-deoxyribonucleoside 5'-triphosphate = DNA(n+1) + diphosphate</text>
        <dbReference type="Rhea" id="RHEA:22508"/>
        <dbReference type="Rhea" id="RHEA-COMP:17339"/>
        <dbReference type="Rhea" id="RHEA-COMP:17340"/>
        <dbReference type="ChEBI" id="CHEBI:33019"/>
        <dbReference type="ChEBI" id="CHEBI:61560"/>
        <dbReference type="ChEBI" id="CHEBI:173112"/>
        <dbReference type="EC" id="2.7.7.7"/>
    </reaction>
</comment>
<comment type="subunit">
    <text evidence="1 2">DNA polymerase III contains a core (composed of alpha, epsilon and theta chains) that associates with a tau subunit. This core dimerizes to form the PolIII' complex. PolIII' associates with the gamma complex (composed of gamma, delta, delta', psi and chi chains) and with the beta chain to form the complete DNA polymerase III complex (By similarity). Interacts with SSB (sbbA) via the latter's 6 C-terminal residues (PubMed:21170359).</text>
</comment>
<comment type="subcellular location">
    <subcellularLocation>
        <location evidence="2">Cytoplasm</location>
        <location evidence="2">Nucleoid</location>
    </subcellularLocation>
    <text evidence="2">Localizes in tight foci to the chromosomal replication center at mid-cell; targeted to the nucleoid via the 6 C-terminal residues of SSB (ssbA) (PubMed:21170359).</text>
</comment>
<comment type="similarity">
    <text evidence="3">Belongs to the DNA polymerase type-C family. DnaE subfamily.</text>
</comment>
<reference key="1">
    <citation type="journal article" date="1997" name="Microbiology">
        <title>Sequencing and functional annotation of the Bacillus subtilis genes in the 200 kb rrnB-dnaB region.</title>
        <authorList>
            <person name="Lapidus A."/>
            <person name="Galleron N."/>
            <person name="Sorokin A."/>
            <person name="Ehrlich S.D."/>
        </authorList>
    </citation>
    <scope>NUCLEOTIDE SEQUENCE [GENOMIC DNA]</scope>
    <source>
        <strain>168</strain>
    </source>
</reference>
<reference key="2">
    <citation type="journal article" date="1997" name="Nature">
        <title>The complete genome sequence of the Gram-positive bacterium Bacillus subtilis.</title>
        <authorList>
            <person name="Kunst F."/>
            <person name="Ogasawara N."/>
            <person name="Moszer I."/>
            <person name="Albertini A.M."/>
            <person name="Alloni G."/>
            <person name="Azevedo V."/>
            <person name="Bertero M.G."/>
            <person name="Bessieres P."/>
            <person name="Bolotin A."/>
            <person name="Borchert S."/>
            <person name="Borriss R."/>
            <person name="Boursier L."/>
            <person name="Brans A."/>
            <person name="Braun M."/>
            <person name="Brignell S.C."/>
            <person name="Bron S."/>
            <person name="Brouillet S."/>
            <person name="Bruschi C.V."/>
            <person name="Caldwell B."/>
            <person name="Capuano V."/>
            <person name="Carter N.M."/>
            <person name="Choi S.-K."/>
            <person name="Codani J.-J."/>
            <person name="Connerton I.F."/>
            <person name="Cummings N.J."/>
            <person name="Daniel R.A."/>
            <person name="Denizot F."/>
            <person name="Devine K.M."/>
            <person name="Duesterhoeft A."/>
            <person name="Ehrlich S.D."/>
            <person name="Emmerson P.T."/>
            <person name="Entian K.-D."/>
            <person name="Errington J."/>
            <person name="Fabret C."/>
            <person name="Ferrari E."/>
            <person name="Foulger D."/>
            <person name="Fritz C."/>
            <person name="Fujita M."/>
            <person name="Fujita Y."/>
            <person name="Fuma S."/>
            <person name="Galizzi A."/>
            <person name="Galleron N."/>
            <person name="Ghim S.-Y."/>
            <person name="Glaser P."/>
            <person name="Goffeau A."/>
            <person name="Golightly E.J."/>
            <person name="Grandi G."/>
            <person name="Guiseppi G."/>
            <person name="Guy B.J."/>
            <person name="Haga K."/>
            <person name="Haiech J."/>
            <person name="Harwood C.R."/>
            <person name="Henaut A."/>
            <person name="Hilbert H."/>
            <person name="Holsappel S."/>
            <person name="Hosono S."/>
            <person name="Hullo M.-F."/>
            <person name="Itaya M."/>
            <person name="Jones L.-M."/>
            <person name="Joris B."/>
            <person name="Karamata D."/>
            <person name="Kasahara Y."/>
            <person name="Klaerr-Blanchard M."/>
            <person name="Klein C."/>
            <person name="Kobayashi Y."/>
            <person name="Koetter P."/>
            <person name="Koningstein G."/>
            <person name="Krogh S."/>
            <person name="Kumano M."/>
            <person name="Kurita K."/>
            <person name="Lapidus A."/>
            <person name="Lardinois S."/>
            <person name="Lauber J."/>
            <person name="Lazarevic V."/>
            <person name="Lee S.-M."/>
            <person name="Levine A."/>
            <person name="Liu H."/>
            <person name="Masuda S."/>
            <person name="Mauel C."/>
            <person name="Medigue C."/>
            <person name="Medina N."/>
            <person name="Mellado R.P."/>
            <person name="Mizuno M."/>
            <person name="Moestl D."/>
            <person name="Nakai S."/>
            <person name="Noback M."/>
            <person name="Noone D."/>
            <person name="O'Reilly M."/>
            <person name="Ogawa K."/>
            <person name="Ogiwara A."/>
            <person name="Oudega B."/>
            <person name="Park S.-H."/>
            <person name="Parro V."/>
            <person name="Pohl T.M."/>
            <person name="Portetelle D."/>
            <person name="Porwollik S."/>
            <person name="Prescott A.M."/>
            <person name="Presecan E."/>
            <person name="Pujic P."/>
            <person name="Purnelle B."/>
            <person name="Rapoport G."/>
            <person name="Rey M."/>
            <person name="Reynolds S."/>
            <person name="Rieger M."/>
            <person name="Rivolta C."/>
            <person name="Rocha E."/>
            <person name="Roche B."/>
            <person name="Rose M."/>
            <person name="Sadaie Y."/>
            <person name="Sato T."/>
            <person name="Scanlan E."/>
            <person name="Schleich S."/>
            <person name="Schroeter R."/>
            <person name="Scoffone F."/>
            <person name="Sekiguchi J."/>
            <person name="Sekowska A."/>
            <person name="Seror S.J."/>
            <person name="Serror P."/>
            <person name="Shin B.-S."/>
            <person name="Soldo B."/>
            <person name="Sorokin A."/>
            <person name="Tacconi E."/>
            <person name="Takagi T."/>
            <person name="Takahashi H."/>
            <person name="Takemaru K."/>
            <person name="Takeuchi M."/>
            <person name="Tamakoshi A."/>
            <person name="Tanaka T."/>
            <person name="Terpstra P."/>
            <person name="Tognoni A."/>
            <person name="Tosato V."/>
            <person name="Uchiyama S."/>
            <person name="Vandenbol M."/>
            <person name="Vannier F."/>
            <person name="Vassarotti A."/>
            <person name="Viari A."/>
            <person name="Wambutt R."/>
            <person name="Wedler E."/>
            <person name="Wedler H."/>
            <person name="Weitzenegger T."/>
            <person name="Winters P."/>
            <person name="Wipat A."/>
            <person name="Yamamoto H."/>
            <person name="Yamane K."/>
            <person name="Yasumoto K."/>
            <person name="Yata K."/>
            <person name="Yoshida K."/>
            <person name="Yoshikawa H.-F."/>
            <person name="Zumstein E."/>
            <person name="Yoshikawa H."/>
            <person name="Danchin A."/>
        </authorList>
    </citation>
    <scope>NUCLEOTIDE SEQUENCE [LARGE SCALE GENOMIC DNA]</scope>
    <source>
        <strain>168</strain>
    </source>
</reference>
<reference key="3">
    <citation type="journal article" date="2010" name="PLoS Genet.">
        <title>The C-terminal domain of the bacterial SSB protein acts as a DNA maintenance hub at active chromosome replication forks.</title>
        <authorList>
            <person name="Costes A."/>
            <person name="Lecointe F."/>
            <person name="McGovern S."/>
            <person name="Quevillon-Cheruel S."/>
            <person name="Polard P."/>
        </authorList>
    </citation>
    <scope>INTERACTION WITH SSBA</scope>
    <scope>SUBCELLULAR LOCATION</scope>
    <source>
        <strain>168</strain>
    </source>
</reference>
<sequence length="1115" mass="125350">MSFVHLQVHSGYSLLNSAAAVEELVSEADRLGYASLALTDDHVMYGAIQFYKACKARGINPIIGLTASVFTDDSELEAYPLVLLAKSNTGYQNLLKISSVLQSKSKGGLKPKWLHSYREGIIAITPGEKGYIETLLEGGLFEQAAQASLEFQSIFGKGAFYFSYQPFKGNQVLSEQILKLSEETGIPVTATGDVHYIRKEDKAAYRCLKAIKAGEKLTDAPAEDLPDLDLKPLEEMQNIYREHPEALQASVEIAEQCRVDVSLGQTRLPSFPTPDGTSADDYLTDICMEGLRSRFGKPDERYLRRLQYELDVIKRMKFSDYFLIVWDFMKHAHEKGIVTGPGRGSAAGSLVAYVLYITDVDPIKHHLLFERFLNPERVSMPDIDIDFPDTRRDEVIQYVQQKYGAMHVAQIITFGTLAAKAALRDVGRVFGVSPKEADQLAKLIPSRPGMTLDEARQQSPQLDKRLRESSLLQQVYSIARKIEGLPRHASTHAAGVVLSEEPLTDVVPLQEGHEGIYLTQYAMDHLEDLGLLKMDFLGLRNLTLIESITSMIEKEENIKIDLSSISYSDDKTFSLLSKGDTTGIFQLESAGMRSVLKRLKPSGLEDIVAVNALYRPGPMENIPLFIDRKHGRAPVHYPHEDLRSILEDTYGVIVYQEQIMMIASRMAGFSLGEADLLRRAVSKKKKEILDRERSHFVEGCLKKEYSVDTANEVYDLIVKFANYGFNRSHAVAYSMIGCQLAYLKAHYPLYFMCGLLTSVIGNEDKISQYLYEAKGSGIRILPPSVNKSSFPFTVENGSVRYSLRAIKSVGVSAVKDIYKARKEKPFEDLFDFCFRVPSKSVNRKMLEALIFSGAMDEFGQNRATLLASIDVALEHAELFAADDDQMGLFLDESFSIKPKYVETEELPLVDLLAFEKETLGIYFSNHPLSAFRKQLTAQGAVSILQAQRAVKRQLSLGVLLSKIKTIRTKTGQNMAFLTLSDETGEMEAVVFPEQFRQLSPVLREGALLFTAGKCEVRQDKIQFIMSRAELLEDMDAEKAPSVYIKIESSQHSQEILAKIKRILLEHKGETGVYLYYERQKQTIKLPESFHINADHQVLYRLKELLGQKNVVLKQW</sequence>
<evidence type="ECO:0000250" key="1"/>
<evidence type="ECO:0000269" key="2">
    <source>
    </source>
</evidence>
<evidence type="ECO:0000305" key="3"/>
<feature type="chain" id="PRO_0000103310" description="DNA polymerase III subunit alpha">
    <location>
        <begin position="1"/>
        <end position="1115"/>
    </location>
</feature>
<proteinExistence type="evidence at protein level"/>
<protein>
    <recommendedName>
        <fullName>DNA polymerase III subunit alpha</fullName>
        <ecNumber>2.7.7.7</ecNumber>
    </recommendedName>
</protein>
<dbReference type="EC" id="2.7.7.7"/>
<dbReference type="EMBL" id="AF008220">
    <property type="protein sequence ID" value="AAC00338.1"/>
    <property type="molecule type" value="Genomic_DNA"/>
</dbReference>
<dbReference type="EMBL" id="AL009126">
    <property type="protein sequence ID" value="CAB14883.1"/>
    <property type="molecule type" value="Genomic_DNA"/>
</dbReference>
<dbReference type="PIR" id="D69617">
    <property type="entry name" value="D69617"/>
</dbReference>
<dbReference type="RefSeq" id="WP_003229412.1">
    <property type="nucleotide sequence ID" value="NZ_OZ025638.1"/>
</dbReference>
<dbReference type="SMR" id="O34623"/>
<dbReference type="FunCoup" id="O34623">
    <property type="interactions" value="449"/>
</dbReference>
<dbReference type="IntAct" id="O34623">
    <property type="interactions" value="5"/>
</dbReference>
<dbReference type="STRING" id="224308.BSU29230"/>
<dbReference type="BindingDB" id="O34623"/>
<dbReference type="ChEMBL" id="CHEMBL5283"/>
<dbReference type="PaxDb" id="224308-BSU29230"/>
<dbReference type="DNASU" id="936593"/>
<dbReference type="EnsemblBacteria" id="CAB14883">
    <property type="protein sequence ID" value="CAB14883"/>
    <property type="gene ID" value="BSU_29230"/>
</dbReference>
<dbReference type="GeneID" id="936593"/>
<dbReference type="KEGG" id="bsu:BSU29230"/>
<dbReference type="PATRIC" id="fig|224308.179.peg.3174"/>
<dbReference type="eggNOG" id="COG0587">
    <property type="taxonomic scope" value="Bacteria"/>
</dbReference>
<dbReference type="InParanoid" id="O34623"/>
<dbReference type="OrthoDB" id="9803237at2"/>
<dbReference type="PhylomeDB" id="O34623"/>
<dbReference type="BioCyc" id="BSUB:BSU29230-MONOMER"/>
<dbReference type="Proteomes" id="UP000001570">
    <property type="component" value="Chromosome"/>
</dbReference>
<dbReference type="GO" id="GO:0005737">
    <property type="term" value="C:cytoplasm"/>
    <property type="evidence" value="ECO:0007669"/>
    <property type="project" value="UniProtKB-KW"/>
</dbReference>
<dbReference type="GO" id="GO:0009295">
    <property type="term" value="C:nucleoid"/>
    <property type="evidence" value="ECO:0007669"/>
    <property type="project" value="UniProtKB-SubCell"/>
</dbReference>
<dbReference type="GO" id="GO:0008408">
    <property type="term" value="F:3'-5' exonuclease activity"/>
    <property type="evidence" value="ECO:0007669"/>
    <property type="project" value="InterPro"/>
</dbReference>
<dbReference type="GO" id="GO:0003887">
    <property type="term" value="F:DNA-directed DNA polymerase activity"/>
    <property type="evidence" value="ECO:0000318"/>
    <property type="project" value="GO_Central"/>
</dbReference>
<dbReference type="GO" id="GO:0003676">
    <property type="term" value="F:nucleic acid binding"/>
    <property type="evidence" value="ECO:0007669"/>
    <property type="project" value="InterPro"/>
</dbReference>
<dbReference type="GO" id="GO:0006260">
    <property type="term" value="P:DNA replication"/>
    <property type="evidence" value="ECO:0007669"/>
    <property type="project" value="UniProtKB-KW"/>
</dbReference>
<dbReference type="CDD" id="cd04485">
    <property type="entry name" value="DnaE_OBF"/>
    <property type="match status" value="1"/>
</dbReference>
<dbReference type="Gene3D" id="1.10.150.870">
    <property type="match status" value="1"/>
</dbReference>
<dbReference type="Gene3D" id="1.10.10.1600">
    <property type="entry name" value="Bacterial DNA polymerase III alpha subunit, thumb domain"/>
    <property type="match status" value="1"/>
</dbReference>
<dbReference type="Gene3D" id="3.20.20.140">
    <property type="entry name" value="Metal-dependent hydrolases"/>
    <property type="match status" value="1"/>
</dbReference>
<dbReference type="InterPro" id="IPR011708">
    <property type="entry name" value="DNA_pol3_alpha_NTPase_dom"/>
</dbReference>
<dbReference type="InterPro" id="IPR041931">
    <property type="entry name" value="DNA_pol3_alpha_thumb_dom"/>
</dbReference>
<dbReference type="InterPro" id="IPR040982">
    <property type="entry name" value="DNA_pol3_finger"/>
</dbReference>
<dbReference type="InterPro" id="IPR004805">
    <property type="entry name" value="DnaE2/DnaE/PolC"/>
</dbReference>
<dbReference type="InterPro" id="IPR029460">
    <property type="entry name" value="DNAPol_HHH"/>
</dbReference>
<dbReference type="InterPro" id="IPR004365">
    <property type="entry name" value="NA-bd_OB_tRNA"/>
</dbReference>
<dbReference type="InterPro" id="IPR004013">
    <property type="entry name" value="PHP_dom"/>
</dbReference>
<dbReference type="InterPro" id="IPR003141">
    <property type="entry name" value="Pol/His_phosphatase_N"/>
</dbReference>
<dbReference type="InterPro" id="IPR016195">
    <property type="entry name" value="Pol/histidinol_Pase-like"/>
</dbReference>
<dbReference type="NCBIfam" id="TIGR00594">
    <property type="entry name" value="polc"/>
    <property type="match status" value="1"/>
</dbReference>
<dbReference type="NCBIfam" id="NF004226">
    <property type="entry name" value="PRK05673.1"/>
    <property type="match status" value="1"/>
</dbReference>
<dbReference type="NCBIfam" id="NF005377">
    <property type="entry name" value="PRK06920.1"/>
    <property type="match status" value="1"/>
</dbReference>
<dbReference type="PANTHER" id="PTHR32294">
    <property type="entry name" value="DNA POLYMERASE III SUBUNIT ALPHA"/>
    <property type="match status" value="1"/>
</dbReference>
<dbReference type="PANTHER" id="PTHR32294:SF0">
    <property type="entry name" value="DNA POLYMERASE III SUBUNIT ALPHA"/>
    <property type="match status" value="1"/>
</dbReference>
<dbReference type="Pfam" id="PF07733">
    <property type="entry name" value="DNA_pol3_alpha"/>
    <property type="match status" value="1"/>
</dbReference>
<dbReference type="Pfam" id="PF17657">
    <property type="entry name" value="DNA_pol3_finger"/>
    <property type="match status" value="1"/>
</dbReference>
<dbReference type="Pfam" id="PF14579">
    <property type="entry name" value="HHH_6"/>
    <property type="match status" value="1"/>
</dbReference>
<dbReference type="Pfam" id="PF02811">
    <property type="entry name" value="PHP"/>
    <property type="match status" value="1"/>
</dbReference>
<dbReference type="Pfam" id="PF01336">
    <property type="entry name" value="tRNA_anti-codon"/>
    <property type="match status" value="1"/>
</dbReference>
<dbReference type="SMART" id="SM00481">
    <property type="entry name" value="POLIIIAc"/>
    <property type="match status" value="1"/>
</dbReference>
<dbReference type="SUPFAM" id="SSF89550">
    <property type="entry name" value="PHP domain-like"/>
    <property type="match status" value="1"/>
</dbReference>
<accession>O34623</accession>
<gene>
    <name type="primary">dnaE</name>
    <name type="ordered locus">BSU29230</name>
</gene>
<name>DPO3A_BACSU</name>